<name>CSPLI_SELML</name>
<comment type="subunit">
    <text evidence="1">Homodimer and heterodimers.</text>
</comment>
<comment type="subcellular location">
    <subcellularLocation>
        <location evidence="1">Cell membrane</location>
        <topology evidence="1">Multi-pass membrane protein</topology>
    </subcellularLocation>
</comment>
<comment type="similarity">
    <text evidence="3">Belongs to the Casparian strip membrane proteins (CASP) family.</text>
</comment>
<protein>
    <recommendedName>
        <fullName>CASP-like protein SELMODRAFT_416718</fullName>
    </recommendedName>
</protein>
<organism>
    <name type="scientific">Selaginella moellendorffii</name>
    <name type="common">Spikemoss</name>
    <dbReference type="NCBI Taxonomy" id="88036"/>
    <lineage>
        <taxon>Eukaryota</taxon>
        <taxon>Viridiplantae</taxon>
        <taxon>Streptophyta</taxon>
        <taxon>Embryophyta</taxon>
        <taxon>Tracheophyta</taxon>
        <taxon>Lycopodiopsida</taxon>
        <taxon>Selaginellales</taxon>
        <taxon>Selaginellaceae</taxon>
        <taxon>Selaginella</taxon>
    </lineage>
</organism>
<feature type="chain" id="PRO_0000418710" description="CASP-like protein SELMODRAFT_416718">
    <location>
        <begin position="1"/>
        <end position="187"/>
    </location>
</feature>
<feature type="transmembrane region" description="Helical" evidence="2">
    <location>
        <begin position="1"/>
        <end position="21"/>
    </location>
</feature>
<feature type="topological domain" description="Extracellular" evidence="2">
    <location>
        <begin position="22"/>
        <end position="100"/>
    </location>
</feature>
<feature type="transmembrane region" description="Helical" evidence="2">
    <location>
        <begin position="101"/>
        <end position="119"/>
    </location>
</feature>
<feature type="topological domain" description="Cytoplasmic" evidence="2">
    <location>
        <begin position="120"/>
        <end position="125"/>
    </location>
</feature>
<feature type="transmembrane region" description="Helical" evidence="2">
    <location>
        <begin position="126"/>
        <end position="145"/>
    </location>
</feature>
<feature type="topological domain" description="Extracellular" evidence="2">
    <location>
        <begin position="146"/>
        <end position="155"/>
    </location>
</feature>
<feature type="transmembrane region" description="Helical" evidence="2">
    <location>
        <begin position="156"/>
        <end position="176"/>
    </location>
</feature>
<feature type="topological domain" description="Cytoplasmic" evidence="2">
    <location>
        <begin position="177"/>
        <end position="187"/>
    </location>
</feature>
<dbReference type="EMBL" id="GL377596">
    <property type="protein sequence ID" value="EFJ22425.1"/>
    <property type="molecule type" value="Genomic_DNA"/>
</dbReference>
<dbReference type="RefSeq" id="XP_002976756.1">
    <property type="nucleotide sequence ID" value="XM_002976710.1"/>
</dbReference>
<dbReference type="SMR" id="D8S069"/>
<dbReference type="STRING" id="88036.D8S069"/>
<dbReference type="EnsemblPlants" id="EFJ22425">
    <property type="protein sequence ID" value="EFJ22425"/>
    <property type="gene ID" value="SELMODRAFT_416718"/>
</dbReference>
<dbReference type="Gramene" id="EFJ22425">
    <property type="protein sequence ID" value="EFJ22425"/>
    <property type="gene ID" value="SELMODRAFT_416718"/>
</dbReference>
<dbReference type="KEGG" id="smo:SELMODRAFT_416718"/>
<dbReference type="eggNOG" id="ENOG502QPKQ">
    <property type="taxonomic scope" value="Eukaryota"/>
</dbReference>
<dbReference type="HOGENOM" id="CLU_083163_0_0_1"/>
<dbReference type="InParanoid" id="D8S069"/>
<dbReference type="Proteomes" id="UP000001514">
    <property type="component" value="Unassembled WGS sequence"/>
</dbReference>
<dbReference type="GO" id="GO:0005886">
    <property type="term" value="C:plasma membrane"/>
    <property type="evidence" value="ECO:0007669"/>
    <property type="project" value="UniProtKB-SubCell"/>
</dbReference>
<dbReference type="InterPro" id="IPR006876">
    <property type="entry name" value="LMBR1-like_membr_prot"/>
</dbReference>
<dbReference type="PANTHER" id="PTHR31652">
    <property type="entry name" value="LIMR FAMILY PROTEIN DDB_G0283707-RELATED"/>
    <property type="match status" value="1"/>
</dbReference>
<dbReference type="PANTHER" id="PTHR31652:SF0">
    <property type="entry name" value="LIMR FAMILY PROTEIN DDB_G0283707-RELATED"/>
    <property type="match status" value="1"/>
</dbReference>
<dbReference type="Pfam" id="PF04791">
    <property type="entry name" value="LMBR1"/>
    <property type="match status" value="1"/>
</dbReference>
<keyword id="KW-1003">Cell membrane</keyword>
<keyword id="KW-0472">Membrane</keyword>
<keyword id="KW-1185">Reference proteome</keyword>
<keyword id="KW-0812">Transmembrane</keyword>
<keyword id="KW-1133">Transmembrane helix</keyword>
<gene>
    <name type="ORF">SELMODRAFT_416718</name>
</gene>
<reference key="1">
    <citation type="journal article" date="2011" name="Science">
        <title>The Selaginella genome identifies genetic changes associated with the evolution of vascular plants.</title>
        <authorList>
            <person name="Banks J.A."/>
            <person name="Nishiyama T."/>
            <person name="Hasebe M."/>
            <person name="Bowman J.L."/>
            <person name="Gribskov M."/>
            <person name="dePamphilis C."/>
            <person name="Albert V.A."/>
            <person name="Aono N."/>
            <person name="Aoyama T."/>
            <person name="Ambrose B.A."/>
            <person name="Ashton N.W."/>
            <person name="Axtell M.J."/>
            <person name="Barker E."/>
            <person name="Barker M.S."/>
            <person name="Bennetzen J.L."/>
            <person name="Bonawitz N.D."/>
            <person name="Chapple C."/>
            <person name="Cheng C."/>
            <person name="Correa L.G."/>
            <person name="Dacre M."/>
            <person name="DeBarry J."/>
            <person name="Dreyer I."/>
            <person name="Elias M."/>
            <person name="Engstrom E.M."/>
            <person name="Estelle M."/>
            <person name="Feng L."/>
            <person name="Finet C."/>
            <person name="Floyd S.K."/>
            <person name="Frommer W.B."/>
            <person name="Fujita T."/>
            <person name="Gramzow L."/>
            <person name="Gutensohn M."/>
            <person name="Harholt J."/>
            <person name="Hattori M."/>
            <person name="Heyl A."/>
            <person name="Hirai T."/>
            <person name="Hiwatashi Y."/>
            <person name="Ishikawa M."/>
            <person name="Iwata M."/>
            <person name="Karol K.G."/>
            <person name="Koehler B."/>
            <person name="Kolukisaoglu U."/>
            <person name="Kubo M."/>
            <person name="Kurata T."/>
            <person name="Lalonde S."/>
            <person name="Li K."/>
            <person name="Li Y."/>
            <person name="Litt A."/>
            <person name="Lyons E."/>
            <person name="Manning G."/>
            <person name="Maruyama T."/>
            <person name="Michael T.P."/>
            <person name="Mikami K."/>
            <person name="Miyazaki S."/>
            <person name="Morinaga S."/>
            <person name="Murata T."/>
            <person name="Mueller-Roeber B."/>
            <person name="Nelson D.R."/>
            <person name="Obara M."/>
            <person name="Oguri Y."/>
            <person name="Olmstead R.G."/>
            <person name="Onodera N."/>
            <person name="Petersen B.L."/>
            <person name="Pils B."/>
            <person name="Prigge M."/>
            <person name="Rensing S.A."/>
            <person name="Riano-Pachon D.M."/>
            <person name="Roberts A.W."/>
            <person name="Sato Y."/>
            <person name="Scheller H.V."/>
            <person name="Schulz B."/>
            <person name="Schulz C."/>
            <person name="Shakirov E.V."/>
            <person name="Shibagaki N."/>
            <person name="Shinohara N."/>
            <person name="Shippen D.E."/>
            <person name="Soerensen I."/>
            <person name="Sotooka R."/>
            <person name="Sugimoto N."/>
            <person name="Sugita M."/>
            <person name="Sumikawa N."/>
            <person name="Tanurdzic M."/>
            <person name="Theissen G."/>
            <person name="Ulvskov P."/>
            <person name="Wakazuki S."/>
            <person name="Weng J.K."/>
            <person name="Willats W.W."/>
            <person name="Wipf D."/>
            <person name="Wolf P.G."/>
            <person name="Yang L."/>
            <person name="Zimmer A.D."/>
            <person name="Zhu Q."/>
            <person name="Mitros T."/>
            <person name="Hellsten U."/>
            <person name="Loque D."/>
            <person name="Otillar R."/>
            <person name="Salamov A."/>
            <person name="Schmutz J."/>
            <person name="Shapiro H."/>
            <person name="Lindquist E."/>
            <person name="Lucas S."/>
            <person name="Rokhsar D."/>
            <person name="Grigoriev I.V."/>
        </authorList>
    </citation>
    <scope>NUCLEOTIDE SEQUENCE [LARGE SCALE GENOMIC DNA]</scope>
</reference>
<sequence>MMFGGVGMATLPLSLIFAFKNRPKCVITRAQYVKVMAWQEVTDLAKRSNELGSPTRRKRLEERTKVSEKCEESPADQELVFLEDDVQALNEAFPQGEKADTSWALTVLFYLAKLVFGILGLALSVIWLLHIIVFMLVNPPAFPFLNQVFIQLDSAWGLLGTTAFAIFCYYLVMSVISGEMHSIYPMK</sequence>
<evidence type="ECO:0000250" key="1"/>
<evidence type="ECO:0000255" key="2"/>
<evidence type="ECO:0000305" key="3"/>
<proteinExistence type="inferred from homology"/>
<accession>D8S069</accession>